<proteinExistence type="inferred from homology"/>
<gene>
    <name evidence="1" type="primary">infA</name>
    <name type="ordered locus">MAV_4403</name>
</gene>
<name>IF1_MYCA1</name>
<evidence type="ECO:0000255" key="1">
    <source>
        <dbReference type="HAMAP-Rule" id="MF_00075"/>
    </source>
</evidence>
<protein>
    <recommendedName>
        <fullName evidence="1">Translation initiation factor IF-1</fullName>
    </recommendedName>
</protein>
<keyword id="KW-0963">Cytoplasm</keyword>
<keyword id="KW-0396">Initiation factor</keyword>
<keyword id="KW-0648">Protein biosynthesis</keyword>
<keyword id="KW-0694">RNA-binding</keyword>
<keyword id="KW-0699">rRNA-binding</keyword>
<organism>
    <name type="scientific">Mycobacterium avium (strain 104)</name>
    <dbReference type="NCBI Taxonomy" id="243243"/>
    <lineage>
        <taxon>Bacteria</taxon>
        <taxon>Bacillati</taxon>
        <taxon>Actinomycetota</taxon>
        <taxon>Actinomycetes</taxon>
        <taxon>Mycobacteriales</taxon>
        <taxon>Mycobacteriaceae</taxon>
        <taxon>Mycobacterium</taxon>
        <taxon>Mycobacterium avium complex (MAC)</taxon>
    </lineage>
</organism>
<accession>A0QKV0</accession>
<sequence>MAKKDGAIEVEGRVVEPLPNAMFRIELENGHKVLAHISGKMRQHYIRILPEDRVVVELSPYDLSRGRIVYRYK</sequence>
<dbReference type="EMBL" id="CP000479">
    <property type="protein sequence ID" value="ABK65827.1"/>
    <property type="molecule type" value="Genomic_DNA"/>
</dbReference>
<dbReference type="RefSeq" id="WP_003418601.1">
    <property type="nucleotide sequence ID" value="NC_008595.1"/>
</dbReference>
<dbReference type="SMR" id="A0QKV0"/>
<dbReference type="GeneID" id="98799387"/>
<dbReference type="KEGG" id="mav:MAV_4403"/>
<dbReference type="HOGENOM" id="CLU_151267_1_0_11"/>
<dbReference type="Proteomes" id="UP000001574">
    <property type="component" value="Chromosome"/>
</dbReference>
<dbReference type="GO" id="GO:0005829">
    <property type="term" value="C:cytosol"/>
    <property type="evidence" value="ECO:0007669"/>
    <property type="project" value="TreeGrafter"/>
</dbReference>
<dbReference type="GO" id="GO:0043022">
    <property type="term" value="F:ribosome binding"/>
    <property type="evidence" value="ECO:0007669"/>
    <property type="project" value="UniProtKB-UniRule"/>
</dbReference>
<dbReference type="GO" id="GO:0019843">
    <property type="term" value="F:rRNA binding"/>
    <property type="evidence" value="ECO:0007669"/>
    <property type="project" value="UniProtKB-UniRule"/>
</dbReference>
<dbReference type="GO" id="GO:0003743">
    <property type="term" value="F:translation initiation factor activity"/>
    <property type="evidence" value="ECO:0007669"/>
    <property type="project" value="UniProtKB-UniRule"/>
</dbReference>
<dbReference type="CDD" id="cd04451">
    <property type="entry name" value="S1_IF1"/>
    <property type="match status" value="1"/>
</dbReference>
<dbReference type="FunFam" id="2.40.50.140:FF:000002">
    <property type="entry name" value="Translation initiation factor IF-1"/>
    <property type="match status" value="1"/>
</dbReference>
<dbReference type="Gene3D" id="2.40.50.140">
    <property type="entry name" value="Nucleic acid-binding proteins"/>
    <property type="match status" value="1"/>
</dbReference>
<dbReference type="HAMAP" id="MF_00075">
    <property type="entry name" value="IF_1"/>
    <property type="match status" value="1"/>
</dbReference>
<dbReference type="InterPro" id="IPR012340">
    <property type="entry name" value="NA-bd_OB-fold"/>
</dbReference>
<dbReference type="InterPro" id="IPR006196">
    <property type="entry name" value="RNA-binding_domain_S1_IF1"/>
</dbReference>
<dbReference type="InterPro" id="IPR004368">
    <property type="entry name" value="TIF_IF1"/>
</dbReference>
<dbReference type="NCBIfam" id="TIGR00008">
    <property type="entry name" value="infA"/>
    <property type="match status" value="1"/>
</dbReference>
<dbReference type="PANTHER" id="PTHR33370">
    <property type="entry name" value="TRANSLATION INITIATION FACTOR IF-1, CHLOROPLASTIC"/>
    <property type="match status" value="1"/>
</dbReference>
<dbReference type="PANTHER" id="PTHR33370:SF1">
    <property type="entry name" value="TRANSLATION INITIATION FACTOR IF-1, CHLOROPLASTIC"/>
    <property type="match status" value="1"/>
</dbReference>
<dbReference type="Pfam" id="PF01176">
    <property type="entry name" value="eIF-1a"/>
    <property type="match status" value="1"/>
</dbReference>
<dbReference type="SUPFAM" id="SSF50249">
    <property type="entry name" value="Nucleic acid-binding proteins"/>
    <property type="match status" value="1"/>
</dbReference>
<dbReference type="PROSITE" id="PS50832">
    <property type="entry name" value="S1_IF1_TYPE"/>
    <property type="match status" value="1"/>
</dbReference>
<comment type="function">
    <text evidence="1">One of the essential components for the initiation of protein synthesis. Stabilizes the binding of IF-2 and IF-3 on the 30S subunit to which N-formylmethionyl-tRNA(fMet) subsequently binds. Helps modulate mRNA selection, yielding the 30S pre-initiation complex (PIC). Upon addition of the 50S ribosomal subunit IF-1, IF-2 and IF-3 are released leaving the mature 70S translation initiation complex.</text>
</comment>
<comment type="subunit">
    <text evidence="1">Component of the 30S ribosomal translation pre-initiation complex which assembles on the 30S ribosome in the order IF-2 and IF-3, IF-1 and N-formylmethionyl-tRNA(fMet); mRNA recruitment can occur at any time during PIC assembly.</text>
</comment>
<comment type="subcellular location">
    <subcellularLocation>
        <location evidence="1">Cytoplasm</location>
    </subcellularLocation>
</comment>
<comment type="similarity">
    <text evidence="1">Belongs to the IF-1 family.</text>
</comment>
<feature type="chain" id="PRO_0000338859" description="Translation initiation factor IF-1">
    <location>
        <begin position="1"/>
        <end position="73"/>
    </location>
</feature>
<feature type="domain" description="S1-like" evidence="1">
    <location>
        <begin position="1"/>
        <end position="73"/>
    </location>
</feature>
<reference key="1">
    <citation type="submission" date="2006-10" db="EMBL/GenBank/DDBJ databases">
        <authorList>
            <person name="Fleischmann R.D."/>
            <person name="Dodson R.J."/>
            <person name="Haft D.H."/>
            <person name="Merkel J.S."/>
            <person name="Nelson W.C."/>
            <person name="Fraser C.M."/>
        </authorList>
    </citation>
    <scope>NUCLEOTIDE SEQUENCE [LARGE SCALE GENOMIC DNA]</scope>
    <source>
        <strain>104</strain>
    </source>
</reference>